<dbReference type="EC" id="2.4.2.7" evidence="1"/>
<dbReference type="EMBL" id="CP000804">
    <property type="protein sequence ID" value="ABU56464.1"/>
    <property type="molecule type" value="Genomic_DNA"/>
</dbReference>
<dbReference type="RefSeq" id="WP_011997868.1">
    <property type="nucleotide sequence ID" value="NC_009767.1"/>
</dbReference>
<dbReference type="SMR" id="A7NG77"/>
<dbReference type="STRING" id="383372.Rcas_0332"/>
<dbReference type="KEGG" id="rca:Rcas_0332"/>
<dbReference type="eggNOG" id="COG0503">
    <property type="taxonomic scope" value="Bacteria"/>
</dbReference>
<dbReference type="HOGENOM" id="CLU_063339_3_3_0"/>
<dbReference type="OrthoDB" id="9803963at2"/>
<dbReference type="UniPathway" id="UPA00588">
    <property type="reaction ID" value="UER00646"/>
</dbReference>
<dbReference type="Proteomes" id="UP000000263">
    <property type="component" value="Chromosome"/>
</dbReference>
<dbReference type="GO" id="GO:0005737">
    <property type="term" value="C:cytoplasm"/>
    <property type="evidence" value="ECO:0007669"/>
    <property type="project" value="UniProtKB-SubCell"/>
</dbReference>
<dbReference type="GO" id="GO:0002055">
    <property type="term" value="F:adenine binding"/>
    <property type="evidence" value="ECO:0007669"/>
    <property type="project" value="TreeGrafter"/>
</dbReference>
<dbReference type="GO" id="GO:0003999">
    <property type="term" value="F:adenine phosphoribosyltransferase activity"/>
    <property type="evidence" value="ECO:0007669"/>
    <property type="project" value="UniProtKB-UniRule"/>
</dbReference>
<dbReference type="GO" id="GO:0016208">
    <property type="term" value="F:AMP binding"/>
    <property type="evidence" value="ECO:0007669"/>
    <property type="project" value="TreeGrafter"/>
</dbReference>
<dbReference type="GO" id="GO:0006168">
    <property type="term" value="P:adenine salvage"/>
    <property type="evidence" value="ECO:0007669"/>
    <property type="project" value="InterPro"/>
</dbReference>
<dbReference type="GO" id="GO:0044209">
    <property type="term" value="P:AMP salvage"/>
    <property type="evidence" value="ECO:0007669"/>
    <property type="project" value="UniProtKB-UniRule"/>
</dbReference>
<dbReference type="GO" id="GO:0006166">
    <property type="term" value="P:purine ribonucleoside salvage"/>
    <property type="evidence" value="ECO:0007669"/>
    <property type="project" value="UniProtKB-KW"/>
</dbReference>
<dbReference type="CDD" id="cd06223">
    <property type="entry name" value="PRTases_typeI"/>
    <property type="match status" value="1"/>
</dbReference>
<dbReference type="FunFam" id="3.40.50.2020:FF:000004">
    <property type="entry name" value="Adenine phosphoribosyltransferase"/>
    <property type="match status" value="1"/>
</dbReference>
<dbReference type="Gene3D" id="3.40.50.2020">
    <property type="match status" value="1"/>
</dbReference>
<dbReference type="HAMAP" id="MF_00004">
    <property type="entry name" value="Aden_phosphoribosyltr"/>
    <property type="match status" value="1"/>
</dbReference>
<dbReference type="InterPro" id="IPR005764">
    <property type="entry name" value="Ade_phspho_trans"/>
</dbReference>
<dbReference type="InterPro" id="IPR000836">
    <property type="entry name" value="PRibTrfase_dom"/>
</dbReference>
<dbReference type="InterPro" id="IPR029057">
    <property type="entry name" value="PRTase-like"/>
</dbReference>
<dbReference type="InterPro" id="IPR050054">
    <property type="entry name" value="UPRTase/APRTase"/>
</dbReference>
<dbReference type="NCBIfam" id="TIGR01090">
    <property type="entry name" value="apt"/>
    <property type="match status" value="1"/>
</dbReference>
<dbReference type="NCBIfam" id="NF002634">
    <property type="entry name" value="PRK02304.1-3"/>
    <property type="match status" value="1"/>
</dbReference>
<dbReference type="NCBIfam" id="NF002636">
    <property type="entry name" value="PRK02304.1-5"/>
    <property type="match status" value="1"/>
</dbReference>
<dbReference type="PANTHER" id="PTHR32315">
    <property type="entry name" value="ADENINE PHOSPHORIBOSYLTRANSFERASE"/>
    <property type="match status" value="1"/>
</dbReference>
<dbReference type="PANTHER" id="PTHR32315:SF3">
    <property type="entry name" value="ADENINE PHOSPHORIBOSYLTRANSFERASE"/>
    <property type="match status" value="1"/>
</dbReference>
<dbReference type="Pfam" id="PF00156">
    <property type="entry name" value="Pribosyltran"/>
    <property type="match status" value="1"/>
</dbReference>
<dbReference type="SUPFAM" id="SSF53271">
    <property type="entry name" value="PRTase-like"/>
    <property type="match status" value="1"/>
</dbReference>
<dbReference type="PROSITE" id="PS00103">
    <property type="entry name" value="PUR_PYR_PR_TRANSFER"/>
    <property type="match status" value="1"/>
</dbReference>
<comment type="function">
    <text evidence="1">Catalyzes a salvage reaction resulting in the formation of AMP, that is energically less costly than de novo synthesis.</text>
</comment>
<comment type="catalytic activity">
    <reaction evidence="1">
        <text>AMP + diphosphate = 5-phospho-alpha-D-ribose 1-diphosphate + adenine</text>
        <dbReference type="Rhea" id="RHEA:16609"/>
        <dbReference type="ChEBI" id="CHEBI:16708"/>
        <dbReference type="ChEBI" id="CHEBI:33019"/>
        <dbReference type="ChEBI" id="CHEBI:58017"/>
        <dbReference type="ChEBI" id="CHEBI:456215"/>
        <dbReference type="EC" id="2.4.2.7"/>
    </reaction>
</comment>
<comment type="pathway">
    <text evidence="1">Purine metabolism; AMP biosynthesis via salvage pathway; AMP from adenine: step 1/1.</text>
</comment>
<comment type="subunit">
    <text evidence="1">Homodimer.</text>
</comment>
<comment type="subcellular location">
    <subcellularLocation>
        <location evidence="1">Cytoplasm</location>
    </subcellularLocation>
</comment>
<comment type="similarity">
    <text evidence="1">Belongs to the purine/pyrimidine phosphoribosyltransferase family.</text>
</comment>
<feature type="chain" id="PRO_0000329370" description="Adenine phosphoribosyltransferase">
    <location>
        <begin position="1"/>
        <end position="172"/>
    </location>
</feature>
<organism>
    <name type="scientific">Roseiflexus castenholzii (strain DSM 13941 / HLO8)</name>
    <dbReference type="NCBI Taxonomy" id="383372"/>
    <lineage>
        <taxon>Bacteria</taxon>
        <taxon>Bacillati</taxon>
        <taxon>Chloroflexota</taxon>
        <taxon>Chloroflexia</taxon>
        <taxon>Chloroflexales</taxon>
        <taxon>Roseiflexineae</taxon>
        <taxon>Roseiflexaceae</taxon>
        <taxon>Roseiflexus</taxon>
    </lineage>
</organism>
<sequence length="172" mass="18812">MTINLTDLIRNVPDFPVPGIQFKDITPLLQHGAAFKQVIDTLAARYEGRSLDAVVGVESRGFIFSAPLAYRLGIGLVPIRKPGKLPWETFAVEYDLEYGSNKLEMHRDALDPGARVVVIDDVLATGGTVAAACQLVETAGAVVEEVACLIELTLLKGRERLANYSFFSMLQY</sequence>
<gene>
    <name evidence="1" type="primary">apt</name>
    <name type="ordered locus">Rcas_0332</name>
</gene>
<reference key="1">
    <citation type="submission" date="2007-08" db="EMBL/GenBank/DDBJ databases">
        <title>Complete sequence of Roseiflexus castenholzii DSM 13941.</title>
        <authorList>
            <consortium name="US DOE Joint Genome Institute"/>
            <person name="Copeland A."/>
            <person name="Lucas S."/>
            <person name="Lapidus A."/>
            <person name="Barry K."/>
            <person name="Glavina del Rio T."/>
            <person name="Dalin E."/>
            <person name="Tice H."/>
            <person name="Pitluck S."/>
            <person name="Thompson L.S."/>
            <person name="Brettin T."/>
            <person name="Bruce D."/>
            <person name="Detter J.C."/>
            <person name="Han C."/>
            <person name="Tapia R."/>
            <person name="Schmutz J."/>
            <person name="Larimer F."/>
            <person name="Land M."/>
            <person name="Hauser L."/>
            <person name="Kyrpides N."/>
            <person name="Mikhailova N."/>
            <person name="Bryant D.A."/>
            <person name="Hanada S."/>
            <person name="Tsukatani Y."/>
            <person name="Richardson P."/>
        </authorList>
    </citation>
    <scope>NUCLEOTIDE SEQUENCE [LARGE SCALE GENOMIC DNA]</scope>
    <source>
        <strain>DSM 13941 / HLO8</strain>
    </source>
</reference>
<evidence type="ECO:0000255" key="1">
    <source>
        <dbReference type="HAMAP-Rule" id="MF_00004"/>
    </source>
</evidence>
<protein>
    <recommendedName>
        <fullName evidence="1">Adenine phosphoribosyltransferase</fullName>
        <shortName evidence="1">APRT</shortName>
        <ecNumber evidence="1">2.4.2.7</ecNumber>
    </recommendedName>
</protein>
<name>APT_ROSCS</name>
<keyword id="KW-0963">Cytoplasm</keyword>
<keyword id="KW-0328">Glycosyltransferase</keyword>
<keyword id="KW-0660">Purine salvage</keyword>
<keyword id="KW-1185">Reference proteome</keyword>
<keyword id="KW-0808">Transferase</keyword>
<proteinExistence type="inferred from homology"/>
<accession>A7NG77</accession>